<dbReference type="EMBL" id="M77480">
    <property type="protein sequence ID" value="AAA30458.2"/>
    <property type="status" value="ALT_SEQ"/>
    <property type="molecule type" value="mRNA"/>
</dbReference>
<dbReference type="PIR" id="S18804">
    <property type="entry name" value="S18804"/>
</dbReference>
<dbReference type="SMR" id="Q29442"/>
<dbReference type="FunCoup" id="Q29442">
    <property type="interactions" value="1"/>
</dbReference>
<dbReference type="STRING" id="9913.ENSBTAP00000018302"/>
<dbReference type="PaxDb" id="9913-ENSBTAP00000018302"/>
<dbReference type="eggNOG" id="KOG3544">
    <property type="taxonomic scope" value="Eukaryota"/>
</dbReference>
<dbReference type="InParanoid" id="Q29442"/>
<dbReference type="OrthoDB" id="10071882at2759"/>
<dbReference type="Proteomes" id="UP000009136">
    <property type="component" value="Unplaced"/>
</dbReference>
<dbReference type="GO" id="GO:0005604">
    <property type="term" value="C:basement membrane"/>
    <property type="evidence" value="ECO:0000314"/>
    <property type="project" value="UniProtKB"/>
</dbReference>
<dbReference type="GO" id="GO:0005587">
    <property type="term" value="C:collagen type IV trimer"/>
    <property type="evidence" value="ECO:0000314"/>
    <property type="project" value="UniProtKB"/>
</dbReference>
<dbReference type="GO" id="GO:0005576">
    <property type="term" value="C:extracellular region"/>
    <property type="evidence" value="ECO:0007669"/>
    <property type="project" value="UniProtKB-KW"/>
</dbReference>
<dbReference type="GO" id="GO:0005201">
    <property type="term" value="F:extracellular matrix structural constituent"/>
    <property type="evidence" value="ECO:0007669"/>
    <property type="project" value="InterPro"/>
</dbReference>
<dbReference type="GO" id="GO:0007155">
    <property type="term" value="P:cell adhesion"/>
    <property type="evidence" value="ECO:0007669"/>
    <property type="project" value="UniProtKB-KW"/>
</dbReference>
<dbReference type="FunFam" id="2.170.240.10:FF:000001">
    <property type="entry name" value="Collagen IV alpha 1 chain"/>
    <property type="match status" value="1"/>
</dbReference>
<dbReference type="Gene3D" id="2.170.240.10">
    <property type="entry name" value="Collagen IV, non-collagenous"/>
    <property type="match status" value="1"/>
</dbReference>
<dbReference type="InterPro" id="IPR008160">
    <property type="entry name" value="Collagen"/>
</dbReference>
<dbReference type="InterPro" id="IPR001442">
    <property type="entry name" value="Collagen_IV_NC"/>
</dbReference>
<dbReference type="InterPro" id="IPR036954">
    <property type="entry name" value="Collagen_IV_NC_sf"/>
</dbReference>
<dbReference type="InterPro" id="IPR016187">
    <property type="entry name" value="CTDL_fold"/>
</dbReference>
<dbReference type="InterPro" id="IPR019326">
    <property type="entry name" value="NDNF"/>
</dbReference>
<dbReference type="PANTHER" id="PTHR14619:SF8">
    <property type="entry name" value="COLLAGEN TYPE IV ALPHA 4 CHAIN"/>
    <property type="match status" value="1"/>
</dbReference>
<dbReference type="PANTHER" id="PTHR14619">
    <property type="entry name" value="NEURON-DERIVED NEUROTROPHIC FACTOR"/>
    <property type="match status" value="1"/>
</dbReference>
<dbReference type="Pfam" id="PF01413">
    <property type="entry name" value="C4"/>
    <property type="match status" value="2"/>
</dbReference>
<dbReference type="Pfam" id="PF01391">
    <property type="entry name" value="Collagen"/>
    <property type="match status" value="2"/>
</dbReference>
<dbReference type="SMART" id="SM00111">
    <property type="entry name" value="C4"/>
    <property type="match status" value="2"/>
</dbReference>
<dbReference type="SUPFAM" id="SSF56436">
    <property type="entry name" value="C-type lectin-like"/>
    <property type="match status" value="2"/>
</dbReference>
<dbReference type="PROSITE" id="PS51403">
    <property type="entry name" value="NC1_IV"/>
    <property type="match status" value="1"/>
</dbReference>
<keyword id="KW-0084">Basement membrane</keyword>
<keyword id="KW-0130">Cell adhesion</keyword>
<keyword id="KW-0176">Collagen</keyword>
<keyword id="KW-0903">Direct protein sequencing</keyword>
<keyword id="KW-1015">Disulfide bond</keyword>
<keyword id="KW-0272">Extracellular matrix</keyword>
<keyword id="KW-0379">Hydroxylation</keyword>
<keyword id="KW-1185">Reference proteome</keyword>
<keyword id="KW-0677">Repeat</keyword>
<keyword id="KW-0964">Secreted</keyword>
<reference key="1">
    <citation type="journal article" date="1992" name="J. Biol. Chem.">
        <title>The alpha 4(IV) chain of basement membrane collagen. Isolation of cDNAs encoding bovine alpha 4(IV) and comparison with other type IV collagens.</title>
        <authorList>
            <person name="Mariyama M."/>
            <person name="Kalluri R."/>
            <person name="Hudson B.G."/>
            <person name="Reeders S.T."/>
        </authorList>
    </citation>
    <scope>NUCLEOTIDE SEQUENCE [MRNA]</scope>
    <scope>PROTEIN SEQUENCE OF 317-328</scope>
    <source>
        <tissue>Lens</tissue>
    </source>
</reference>
<reference key="2">
    <citation type="journal article" date="1992" name="Connect. Tissue Res.">
        <title>Partial protein sequence of the globular domain of alpha 4(IV) collagen chain: sites of sequence variability and homology with alpha 2(IV).</title>
        <authorList>
            <person name="Matsukura H."/>
            <person name="Michael A.F."/>
            <person name="Fish A.J."/>
            <person name="Butkowski R.J."/>
        </authorList>
    </citation>
    <scope>PROTEIN SEQUENCE OF 217-255; 257-278; 303-314; 391-399 AND 411-434</scope>
</reference>
<reference key="3">
    <citation type="journal article" date="1990" name="J. Biol. Chem.">
        <title>Glomerular basement membrane. Identification of a fourth chain, alpha 4, of type IV collagen.</title>
        <authorList>
            <person name="Gunwar S."/>
            <person name="Saus J."/>
            <person name="Noelken M.E."/>
            <person name="Hudson B.G."/>
        </authorList>
    </citation>
    <scope>PROTEIN SEQUENCE OF 217-246</scope>
</reference>
<reference key="4">
    <citation type="journal article" date="1991" name="J. Biol. Chem.">
        <title>Glomerular basement membrane. Identification of dimeric subunits of the noncollagenous domain (hexamer) of collagen IV and the Goodpasture antigen.</title>
        <authorList>
            <person name="Gunwar S."/>
            <person name="Ballester F."/>
            <person name="Kalluri R."/>
            <person name="Timoneda J."/>
            <person name="Chonko A.M."/>
            <person name="Edwards S.J."/>
            <person name="Noelken M.E."/>
            <person name="Hudson B.G."/>
        </authorList>
    </citation>
    <scope>PROTEIN SEQUENCE OF 217-237</scope>
</reference>
<reference key="5">
    <citation type="journal article" date="1987" name="J. Biol. Chem.">
        <title>Localization of the Goodpasture epitope to a novel chain of basement membrane collagen.</title>
        <authorList>
            <person name="Butkowski R.J."/>
            <person name="Langeveld J.P.M."/>
            <person name="Wieslander J."/>
            <person name="Hamilton J."/>
            <person name="Hudson B.G."/>
        </authorList>
    </citation>
    <scope>PROTEIN SEQUENCE OF 217-233</scope>
</reference>
<organism>
    <name type="scientific">Bos taurus</name>
    <name type="common">Bovine</name>
    <dbReference type="NCBI Taxonomy" id="9913"/>
    <lineage>
        <taxon>Eukaryota</taxon>
        <taxon>Metazoa</taxon>
        <taxon>Chordata</taxon>
        <taxon>Craniata</taxon>
        <taxon>Vertebrata</taxon>
        <taxon>Euteleostomi</taxon>
        <taxon>Mammalia</taxon>
        <taxon>Eutheria</taxon>
        <taxon>Laurasiatheria</taxon>
        <taxon>Artiodactyla</taxon>
        <taxon>Ruminantia</taxon>
        <taxon>Pecora</taxon>
        <taxon>Bovidae</taxon>
        <taxon>Bovinae</taxon>
        <taxon>Bos</taxon>
    </lineage>
</organism>
<feature type="chain" id="PRO_0000059413" description="Collagen alpha-4(IV) chain">
    <location>
        <begin position="1" status="less than"/>
        <end position="453"/>
    </location>
</feature>
<feature type="domain" description="Collagen IV NC1" evidence="2">
    <location>
        <begin position="228"/>
        <end position="453"/>
    </location>
</feature>
<feature type="region of interest" description="Triple-helical region">
    <location>
        <begin position="1" status="less than"/>
        <end position="222"/>
    </location>
</feature>
<feature type="region of interest" description="Disordered" evidence="3">
    <location>
        <begin position="1"/>
        <end position="218"/>
    </location>
</feature>
<feature type="compositionally biased region" description="Pro residues" evidence="3">
    <location>
        <begin position="26"/>
        <end position="44"/>
    </location>
</feature>
<feature type="compositionally biased region" description="Pro residues" evidence="3">
    <location>
        <begin position="60"/>
        <end position="72"/>
    </location>
</feature>
<feature type="compositionally biased region" description="Pro residues" evidence="3">
    <location>
        <begin position="95"/>
        <end position="122"/>
    </location>
</feature>
<feature type="compositionally biased region" description="Low complexity" evidence="3">
    <location>
        <begin position="153"/>
        <end position="162"/>
    </location>
</feature>
<feature type="compositionally biased region" description="Basic and acidic residues" evidence="3">
    <location>
        <begin position="174"/>
        <end position="183"/>
    </location>
</feature>
<feature type="compositionally biased region" description="Pro residues" evidence="3">
    <location>
        <begin position="206"/>
        <end position="215"/>
    </location>
</feature>
<feature type="disulfide bond" description="Or C-243 with C-329" evidence="2">
    <location>
        <begin position="243"/>
        <end position="332"/>
    </location>
</feature>
<feature type="disulfide bond" description="Or C-276 with C-332" evidence="2">
    <location>
        <begin position="276"/>
        <end position="329"/>
    </location>
</feature>
<feature type="disulfide bond" evidence="2">
    <location>
        <begin position="288"/>
        <end position="294"/>
    </location>
</feature>
<feature type="disulfide bond" description="Or C-351 with C-446" evidence="2">
    <location>
        <begin position="351"/>
        <end position="449"/>
    </location>
</feature>
<feature type="disulfide bond" description="Or C-385 with C-449" evidence="2">
    <location>
        <begin position="385"/>
        <end position="446"/>
    </location>
</feature>
<feature type="disulfide bond" evidence="2">
    <location>
        <begin position="397"/>
        <end position="404"/>
    </location>
</feature>
<feature type="sequence conflict" description="In Ref. 2; AA sequence, 3; AA sequence and 5; AA sequence." evidence="4" ref="2 3 5">
    <original>I</original>
    <variation>P</variation>
    <location>
        <position position="219"/>
    </location>
</feature>
<feature type="non-terminal residue">
    <location>
        <position position="1"/>
    </location>
</feature>
<proteinExistence type="evidence at protein level"/>
<name>CO4A4_BOVIN</name>
<gene>
    <name type="primary">COL4A4</name>
</gene>
<accession>Q29442</accession>
<evidence type="ECO:0000250" key="1"/>
<evidence type="ECO:0000255" key="2">
    <source>
        <dbReference type="PROSITE-ProRule" id="PRU00736"/>
    </source>
</evidence>
<evidence type="ECO:0000256" key="3">
    <source>
        <dbReference type="SAM" id="MobiDB-lite"/>
    </source>
</evidence>
<evidence type="ECO:0000305" key="4"/>
<protein>
    <recommendedName>
        <fullName>Collagen alpha-4(IV) chain</fullName>
    </recommendedName>
</protein>
<comment type="function">
    <text>Type IV collagen is the major structural component of glomerular basement membranes (GBM), forming a 'chicken-wire' meshwork together with laminins, proteoglycans and entactin/nidogen.</text>
</comment>
<comment type="subunit">
    <text evidence="1">There are six type IV collagen isoforms, alpha 1(IV)-alpha 6(IV), each of which can form a triple helix structure with 2 other chains to generate type IV collagen network. The alpha 3(IV) chain forms a triple helical protomer with alpha 4(IV) and alpha 5(IV); this triple helical structure dimerizes through NC1-NC1 domain interactions such that the alpha 3(IV), alpha 4(IV) and alpha 5(IV) chains of one protomer connect with the alpha 5(IV), alpha 4(IV) and alpha 3(IV) chains of the opposite protomer, respectively. Associates with LAMB2 at the neuromuscular junction and in GBM (By similarity).</text>
</comment>
<comment type="subcellular location">
    <subcellularLocation>
        <location evidence="2">Secreted</location>
        <location evidence="2">Extracellular space</location>
        <location evidence="2">Extracellular matrix</location>
        <location evidence="2">Basement membrane</location>
    </subcellularLocation>
    <text evidence="1">Colocalizes with COL4A4 and COL4A5 in GBM, tubular basement membrane (TBM) and synaptic basal lamina (BL).</text>
</comment>
<comment type="tissue specificity">
    <text>Alpha 3 and alpha 4 type IV collagens are colocalized and present only in basement membranes of kidney, eye, cochlea, lung and brain.</text>
</comment>
<comment type="domain">
    <text>Alpha chains of type IV collagen have a non-collagenous domain (NC1) at their C-terminus, frequent interruptions of the G-X-Y repeats in the long central triple-helical domain (which may cause flexibility in the triple helix), and a short N-terminal triple-helical 7S domain.</text>
</comment>
<comment type="PTM">
    <text>Prolines at the third position of the tripeptide repeating unit (G-X-Y) are hydroxylated in some or all of the chains.</text>
</comment>
<comment type="PTM">
    <text>Type IV collagens contain numerous cysteine residues which are involved in inter- and intramolecular disulfide bonding. 12 of these, located in the NC1 domain, are conserved in all known type IV collagens.</text>
</comment>
<comment type="PTM">
    <text evidence="1">The trimeric structure of the NC1 domains is stabilized by covalent bonds between Lys and Met residues.</text>
</comment>
<comment type="similarity">
    <text evidence="2">Belongs to the type IV collagen family.</text>
</comment>
<sequence length="453" mass="46385">GPPGPPGAPGKALKGDIPDPGLPGDQGPPGPDGPRGVPGPPGPPGSVDLLKGEPGDCGLPGPPGLPGPPGPPGHKGFPGCDGKHGQKGPMGFPGPQGPPGSPGPPGDKGLPGPPGRRGPLGPPGSRGEPGPPADLDACPRIPGLPGVPGPRGPEGTMGLPGMRGPPGPGCKGEPGLDGRRGEDGLPGSPGPPGHKGDMGEAGCPGAPGPPGPMGDPGPIGFGPGYLSGFLLVLHSQTDGEPTCPMGMPRLWTGYSLLYLEGQERAHNQDLGLAGSCLPIFSTLPFAYCNIHQVCHYARRNDRSYWLASTAPLPMTPLSEDEIRPYISRCAVCEAPAQAVAVHSQDQSIPPCPRAWRSLWIGYSFLMHTGAGDQGGGQALMSPGSCLEDFRAAPFLECQGRQGTCHFFANKYSFWLTTVRPDLQFSSAPLPDTLKESHAQRQKISRCQVCVKHS</sequence>